<protein>
    <recommendedName>
        <fullName evidence="1">3-ketoacyl-CoA thiolase</fullName>
        <ecNumber evidence="1">2.3.1.16</ecNumber>
    </recommendedName>
    <alternativeName>
        <fullName evidence="1">ACSs</fullName>
    </alternativeName>
    <alternativeName>
        <fullName evidence="1">Acetyl-CoA acyltransferase</fullName>
    </alternativeName>
    <alternativeName>
        <fullName evidence="1">Acyl-CoA ligase</fullName>
    </alternativeName>
    <alternativeName>
        <fullName evidence="1">Beta-ketothiolase</fullName>
    </alternativeName>
    <alternativeName>
        <fullName evidence="1">Fatty acid oxidation complex subunit beta</fullName>
    </alternativeName>
</protein>
<accession>Q6D2L6</accession>
<name>FADI_PECAS</name>
<organism>
    <name type="scientific">Pectobacterium atrosepticum (strain SCRI 1043 / ATCC BAA-672)</name>
    <name type="common">Erwinia carotovora subsp. atroseptica</name>
    <dbReference type="NCBI Taxonomy" id="218491"/>
    <lineage>
        <taxon>Bacteria</taxon>
        <taxon>Pseudomonadati</taxon>
        <taxon>Pseudomonadota</taxon>
        <taxon>Gammaproteobacteria</taxon>
        <taxon>Enterobacterales</taxon>
        <taxon>Pectobacteriaceae</taxon>
        <taxon>Pectobacterium</taxon>
    </lineage>
</organism>
<feature type="chain" id="PRO_0000206436" description="3-ketoacyl-CoA thiolase">
    <location>
        <begin position="1"/>
        <end position="437"/>
    </location>
</feature>
<feature type="active site" description="Acyl-thioester intermediate" evidence="1">
    <location>
        <position position="99"/>
    </location>
</feature>
<feature type="active site" description="Proton acceptor" evidence="1">
    <location>
        <position position="392"/>
    </location>
</feature>
<feature type="active site" description="Proton acceptor" evidence="1">
    <location>
        <position position="422"/>
    </location>
</feature>
<reference key="1">
    <citation type="journal article" date="2004" name="Proc. Natl. Acad. Sci. U.S.A.">
        <title>Genome sequence of the enterobacterial phytopathogen Erwinia carotovora subsp. atroseptica and characterization of virulence factors.</title>
        <authorList>
            <person name="Bell K.S."/>
            <person name="Sebaihia M."/>
            <person name="Pritchard L."/>
            <person name="Holden M.T.G."/>
            <person name="Hyman L.J."/>
            <person name="Holeva M.C."/>
            <person name="Thomson N.R."/>
            <person name="Bentley S.D."/>
            <person name="Churcher L.J.C."/>
            <person name="Mungall K."/>
            <person name="Atkin R."/>
            <person name="Bason N."/>
            <person name="Brooks K."/>
            <person name="Chillingworth T."/>
            <person name="Clark K."/>
            <person name="Doggett J."/>
            <person name="Fraser A."/>
            <person name="Hance Z."/>
            <person name="Hauser H."/>
            <person name="Jagels K."/>
            <person name="Moule S."/>
            <person name="Norbertczak H."/>
            <person name="Ormond D."/>
            <person name="Price C."/>
            <person name="Quail M.A."/>
            <person name="Sanders M."/>
            <person name="Walker D."/>
            <person name="Whitehead S."/>
            <person name="Salmond G.P.C."/>
            <person name="Birch P.R.J."/>
            <person name="Parkhill J."/>
            <person name="Toth I.K."/>
        </authorList>
    </citation>
    <scope>NUCLEOTIDE SEQUENCE [LARGE SCALE GENOMIC DNA]</scope>
    <source>
        <strain>SCRI 1043 / ATCC BAA-672</strain>
    </source>
</reference>
<dbReference type="EC" id="2.3.1.16" evidence="1"/>
<dbReference type="EMBL" id="BX950851">
    <property type="protein sequence ID" value="CAG75978.1"/>
    <property type="molecule type" value="Genomic_DNA"/>
</dbReference>
<dbReference type="RefSeq" id="WP_011094603.1">
    <property type="nucleotide sequence ID" value="NC_004547.2"/>
</dbReference>
<dbReference type="SMR" id="Q6D2L6"/>
<dbReference type="STRING" id="218491.ECA3079"/>
<dbReference type="KEGG" id="eca:ECA3079"/>
<dbReference type="PATRIC" id="fig|218491.5.peg.3112"/>
<dbReference type="eggNOG" id="COG0183">
    <property type="taxonomic scope" value="Bacteria"/>
</dbReference>
<dbReference type="HOGENOM" id="CLU_031026_2_0_6"/>
<dbReference type="OrthoDB" id="8951704at2"/>
<dbReference type="UniPathway" id="UPA00659"/>
<dbReference type="Proteomes" id="UP000007966">
    <property type="component" value="Chromosome"/>
</dbReference>
<dbReference type="GO" id="GO:0005829">
    <property type="term" value="C:cytosol"/>
    <property type="evidence" value="ECO:0007669"/>
    <property type="project" value="TreeGrafter"/>
</dbReference>
<dbReference type="GO" id="GO:0003988">
    <property type="term" value="F:acetyl-CoA C-acyltransferase activity"/>
    <property type="evidence" value="ECO:0007669"/>
    <property type="project" value="UniProtKB-UniRule"/>
</dbReference>
<dbReference type="GO" id="GO:0006635">
    <property type="term" value="P:fatty acid beta-oxidation"/>
    <property type="evidence" value="ECO:0007669"/>
    <property type="project" value="UniProtKB-UniRule"/>
</dbReference>
<dbReference type="CDD" id="cd00751">
    <property type="entry name" value="thiolase"/>
    <property type="match status" value="1"/>
</dbReference>
<dbReference type="FunFam" id="3.40.47.10:FF:000011">
    <property type="entry name" value="3-ketoacyl-CoA thiolase"/>
    <property type="match status" value="1"/>
</dbReference>
<dbReference type="Gene3D" id="3.40.47.10">
    <property type="match status" value="1"/>
</dbReference>
<dbReference type="HAMAP" id="MF_01618">
    <property type="entry name" value="FadI"/>
    <property type="match status" value="1"/>
</dbReference>
<dbReference type="InterPro" id="IPR050521">
    <property type="entry name" value="3-ketoacyl-CoA_Thiolase"/>
</dbReference>
<dbReference type="InterPro" id="IPR012806">
    <property type="entry name" value="Ac-CoA_C-AcTrfase_FadI"/>
</dbReference>
<dbReference type="InterPro" id="IPR002155">
    <property type="entry name" value="Thiolase"/>
</dbReference>
<dbReference type="InterPro" id="IPR016039">
    <property type="entry name" value="Thiolase-like"/>
</dbReference>
<dbReference type="InterPro" id="IPR020615">
    <property type="entry name" value="Thiolase_acyl_enz_int_AS"/>
</dbReference>
<dbReference type="InterPro" id="IPR020610">
    <property type="entry name" value="Thiolase_AS"/>
</dbReference>
<dbReference type="InterPro" id="IPR020617">
    <property type="entry name" value="Thiolase_C"/>
</dbReference>
<dbReference type="InterPro" id="IPR020613">
    <property type="entry name" value="Thiolase_CS"/>
</dbReference>
<dbReference type="InterPro" id="IPR020616">
    <property type="entry name" value="Thiolase_N"/>
</dbReference>
<dbReference type="NCBIfam" id="TIGR01930">
    <property type="entry name" value="AcCoA-C-Actrans"/>
    <property type="match status" value="1"/>
</dbReference>
<dbReference type="NCBIfam" id="TIGR02446">
    <property type="entry name" value="FadI"/>
    <property type="match status" value="1"/>
</dbReference>
<dbReference type="NCBIfam" id="NF006516">
    <property type="entry name" value="PRK08963.1"/>
    <property type="match status" value="1"/>
</dbReference>
<dbReference type="PANTHER" id="PTHR42689">
    <property type="entry name" value="ACETYL-COA ACYLTRANSFERASE FADA2 (3-KETOACYL-COA THIOLASE) (BETA-KETOTHIOLASE)-RELATED"/>
    <property type="match status" value="1"/>
</dbReference>
<dbReference type="PANTHER" id="PTHR42689:SF1">
    <property type="entry name" value="ACETYL-COA ACYLTRANSFERASE FADA2 (3-KETOACYL-COA THIOLASE) (BETA-KETOTHIOLASE)-RELATED"/>
    <property type="match status" value="1"/>
</dbReference>
<dbReference type="Pfam" id="PF02803">
    <property type="entry name" value="Thiolase_C"/>
    <property type="match status" value="1"/>
</dbReference>
<dbReference type="Pfam" id="PF00108">
    <property type="entry name" value="Thiolase_N"/>
    <property type="match status" value="1"/>
</dbReference>
<dbReference type="PIRSF" id="PIRSF000429">
    <property type="entry name" value="Ac-CoA_Ac_transf"/>
    <property type="match status" value="1"/>
</dbReference>
<dbReference type="SUPFAM" id="SSF53901">
    <property type="entry name" value="Thiolase-like"/>
    <property type="match status" value="2"/>
</dbReference>
<dbReference type="PROSITE" id="PS00098">
    <property type="entry name" value="THIOLASE_1"/>
    <property type="match status" value="1"/>
</dbReference>
<dbReference type="PROSITE" id="PS00737">
    <property type="entry name" value="THIOLASE_2"/>
    <property type="match status" value="1"/>
</dbReference>
<dbReference type="PROSITE" id="PS00099">
    <property type="entry name" value="THIOLASE_3"/>
    <property type="match status" value="1"/>
</dbReference>
<sequence length="437" mass="46286">MSEVLPLITRRGDRIAFVSGLRTPFARQATAYHGVPAIELGKLVTSELLVRTGIDPELIELLVFGQVVQMPEAPNIAREIVLGTGMSVHTDAYSVSRACATSFQAVANVAESIMAGTVEVGIAGGADSSSVLPIGVSKALARTLVDMNKARTLGQKLRLLSGLRPKDLLPVAPAVAEYSTGLRMGDTAEQMAKTYGITREEQDELAHRSHKLAAQAWESGVLRDEVMTAYVPPYEKALSEDNNVRHDSAIEQYSRLRPAFDRRHGTVTAANSTPLTDGAAAVLMMSESKAKSLGLTPLGYLRSYAFSAIGVQRDMLLGPAYASPLALARAGVALADLTLIDMHEAFAAQTLANLKLFASDEFARNQLGRNAALGEVDRAKFNVLGGSIAYGHPFAATGARMITQTLNELRRRGGGLGLTTACAAGGLGAAMVLEVTP</sequence>
<proteinExistence type="inferred from homology"/>
<keyword id="KW-0012">Acyltransferase</keyword>
<keyword id="KW-0963">Cytoplasm</keyword>
<keyword id="KW-0276">Fatty acid metabolism</keyword>
<keyword id="KW-0442">Lipid degradation</keyword>
<keyword id="KW-0443">Lipid metabolism</keyword>
<keyword id="KW-1185">Reference proteome</keyword>
<keyword id="KW-0808">Transferase</keyword>
<comment type="function">
    <text evidence="1">Catalyzes the final step of fatty acid oxidation in which acetyl-CoA is released and the CoA ester of a fatty acid two carbons shorter is formed.</text>
</comment>
<comment type="catalytic activity">
    <reaction evidence="1">
        <text>an acyl-CoA + acetyl-CoA = a 3-oxoacyl-CoA + CoA</text>
        <dbReference type="Rhea" id="RHEA:21564"/>
        <dbReference type="ChEBI" id="CHEBI:57287"/>
        <dbReference type="ChEBI" id="CHEBI:57288"/>
        <dbReference type="ChEBI" id="CHEBI:58342"/>
        <dbReference type="ChEBI" id="CHEBI:90726"/>
        <dbReference type="EC" id="2.3.1.16"/>
    </reaction>
</comment>
<comment type="pathway">
    <text evidence="1">Lipid metabolism; fatty acid beta-oxidation.</text>
</comment>
<comment type="subunit">
    <text evidence="1">Heterotetramer of two alpha chains (FadJ) and two beta chains (FadI).</text>
</comment>
<comment type="subcellular location">
    <subcellularLocation>
        <location evidence="1">Cytoplasm</location>
    </subcellularLocation>
</comment>
<comment type="similarity">
    <text evidence="1">Belongs to the thiolase-like superfamily. Thiolase family.</text>
</comment>
<evidence type="ECO:0000255" key="1">
    <source>
        <dbReference type="HAMAP-Rule" id="MF_01618"/>
    </source>
</evidence>
<gene>
    <name evidence="1" type="primary">fadI</name>
    <name type="ordered locus">ECA3079</name>
</gene>